<sequence length="782" mass="86752">MKISSGAINFSTIPNQVKKLITSIREHTKNGLTSKITSVKNTHTSLNEKFKTGKDSPIEFALPQKIKDFFQPKDKNTLNKTLITVKNIKDTNNAGKKNISAEDVSKMNAAFMRKHIANQTCDYNYRMTGAAPLPGGVSVSANNRPTVSEGRTPPVSPSLSLQATSSPSSPADWAKKLTDAVLRQKAGETLTAADRDFSNADFRNITFSKIFPPSFMERDGDIIKGFNFSNSKFTYSDISHLHFDECRFTYSTLSDVVCSNTKFSNSDMNEVVLQYSITTQQQPSFIDTTLKNTLIRHKANLSGVILNEPDNSSPPSVSGGGNFIRLGDIWLQMPLLWTENAVDGFLNHEHNNGKSILMTIDSLPDKYSQEKVQAMENLVKSLRGGRLTEACIRPVESSLVSVLAHPPYTQSALISEWLGPVQERFFAHQCQTYNDVPLPAPDTYYQQRILPVLLDSFDRNSAAMTTHSGLFNQVILHCMTGVDCTDGTRQKAAALYEQYLAHPAVSPHIHNGLFGNYDGSPDWTTRAADNFLLLSSQDSDTAMMLSTDTLLTMLNPTPDTAWDNFYLLRAGENVSTAQISPVELFRHDFPVFLAAFNQQAVQRRFGELIDIILSTEEHGELNQQFLAATNQKHSTVKLIDDASVSRLATIFDPLLPEGKLSPAHYQHILSAYHLTDATPQKQAETLFCLSTAFARYSSSAIFGTEHDSPPALRGYAEALMQKAWELSPAIFPSSEQFTDWSDRFHGLHGAFTCTSVVADSMQRHARKYFPSVLSSILPLAWA</sequence>
<organism>
    <name type="scientific">Salmonella newport (strain SL254)</name>
    <dbReference type="NCBI Taxonomy" id="423368"/>
    <lineage>
        <taxon>Bacteria</taxon>
        <taxon>Pseudomonadati</taxon>
        <taxon>Pseudomonadota</taxon>
        <taxon>Gammaproteobacteria</taxon>
        <taxon>Enterobacterales</taxon>
        <taxon>Enterobacteriaceae</taxon>
        <taxon>Salmonella</taxon>
    </lineage>
</organism>
<feature type="chain" id="PRO_0000395854" description="E3 ubiquitin-protein ligase SopA">
    <location>
        <begin position="1"/>
        <end position="782"/>
    </location>
</feature>
<feature type="region of interest" description="Disordered" evidence="3">
    <location>
        <begin position="137"/>
        <end position="171"/>
    </location>
</feature>
<feature type="compositionally biased region" description="Low complexity" evidence="3">
    <location>
        <begin position="157"/>
        <end position="171"/>
    </location>
</feature>
<feature type="active site" description="Glycyl thioester intermediate" evidence="1">
    <location>
        <position position="753"/>
    </location>
</feature>
<dbReference type="EC" id="2.3.2.26"/>
<dbReference type="EMBL" id="CP001113">
    <property type="protein sequence ID" value="ACF63202.1"/>
    <property type="molecule type" value="Genomic_DNA"/>
</dbReference>
<dbReference type="RefSeq" id="WP_000703996.1">
    <property type="nucleotide sequence ID" value="NZ_CCMR01000002.1"/>
</dbReference>
<dbReference type="SMR" id="B4SX34"/>
<dbReference type="KEGG" id="see:SNSL254_A2243"/>
<dbReference type="HOGENOM" id="CLU_026158_0_0_6"/>
<dbReference type="Proteomes" id="UP000008824">
    <property type="component" value="Chromosome"/>
</dbReference>
<dbReference type="GO" id="GO:0005576">
    <property type="term" value="C:extracellular region"/>
    <property type="evidence" value="ECO:0000250"/>
    <property type="project" value="UniProtKB"/>
</dbReference>
<dbReference type="GO" id="GO:0043657">
    <property type="term" value="C:host cell"/>
    <property type="evidence" value="ECO:0007669"/>
    <property type="project" value="UniProtKB-SubCell"/>
</dbReference>
<dbReference type="GO" id="GO:0004842">
    <property type="term" value="F:ubiquitin-protein transferase activity"/>
    <property type="evidence" value="ECO:0000250"/>
    <property type="project" value="UniProtKB"/>
</dbReference>
<dbReference type="GO" id="GO:0016567">
    <property type="term" value="P:protein ubiquitination"/>
    <property type="evidence" value="ECO:0000250"/>
    <property type="project" value="UniProtKB"/>
</dbReference>
<dbReference type="FunFam" id="1.25.40.300:FF:000001">
    <property type="entry name" value="SPI-1 type III secretion system effector HECT-type E3 ubiquitin transferase SopA"/>
    <property type="match status" value="1"/>
</dbReference>
<dbReference type="FunFam" id="2.160.20.80:FF:000005">
    <property type="entry name" value="SPI-1 type III secretion system effector HECT-type E3 ubiquitin transferase SopA"/>
    <property type="match status" value="1"/>
</dbReference>
<dbReference type="Gene3D" id="2.160.20.80">
    <property type="entry name" value="E3 ubiquitin-protein ligase SopA"/>
    <property type="match status" value="1"/>
</dbReference>
<dbReference type="Gene3D" id="1.10.4140.10">
    <property type="entry name" value="effector protein (NleL)"/>
    <property type="match status" value="1"/>
</dbReference>
<dbReference type="Gene3D" id="3.40.1850.10">
    <property type="entry name" value="HECT-like ubiquitin ligase"/>
    <property type="match status" value="1"/>
</dbReference>
<dbReference type="Gene3D" id="1.25.40.300">
    <property type="entry name" value="Putative secreted effector protein"/>
    <property type="match status" value="1"/>
</dbReference>
<dbReference type="InterPro" id="IPR025725">
    <property type="entry name" value="SopA-like_cat"/>
</dbReference>
<dbReference type="InterPro" id="IPR038270">
    <property type="entry name" value="SopA-like_catalytic_sf"/>
</dbReference>
<dbReference type="InterPro" id="IPR025726">
    <property type="entry name" value="SopA-like_central"/>
</dbReference>
<dbReference type="NCBIfam" id="NF011904">
    <property type="entry name" value="PRK15377.1"/>
    <property type="match status" value="1"/>
</dbReference>
<dbReference type="Pfam" id="PF13981">
    <property type="entry name" value="SopA"/>
    <property type="match status" value="1"/>
</dbReference>
<dbReference type="Pfam" id="PF13979">
    <property type="entry name" value="SopA_C"/>
    <property type="match status" value="1"/>
</dbReference>
<dbReference type="SUPFAM" id="SSF141571">
    <property type="entry name" value="Pentapeptide repeat-like"/>
    <property type="match status" value="1"/>
</dbReference>
<name>SOPA_SALNS</name>
<gene>
    <name type="primary">sopA</name>
    <name type="ordered locus">SNSL254_A2243</name>
</gene>
<keyword id="KW-0964">Secreted</keyword>
<keyword id="KW-0808">Transferase</keyword>
<keyword id="KW-0832">Ubl conjugation</keyword>
<keyword id="KW-0833">Ubl conjugation pathway</keyword>
<keyword id="KW-0843">Virulence</keyword>
<comment type="function">
    <text evidence="2">Effector proteins function to alter host cell physiology and promote bacterial survival in host tissues. This protein is an E3 ubiquitin ligase that interferes with host's ubiquitination pathway.</text>
</comment>
<comment type="catalytic activity">
    <reaction>
        <text>S-ubiquitinyl-[E2 ubiquitin-conjugating enzyme]-L-cysteine + [acceptor protein]-L-lysine = [E2 ubiquitin-conjugating enzyme]-L-cysteine + N(6)-ubiquitinyl-[acceptor protein]-L-lysine.</text>
        <dbReference type="EC" id="2.3.2.26"/>
    </reaction>
</comment>
<comment type="subcellular location">
    <subcellularLocation>
        <location evidence="2">Secreted</location>
    </subcellularLocation>
    <subcellularLocation>
        <location evidence="2">Host cell</location>
    </subcellularLocation>
    <text evidence="2">Secreted via type III secretion system 1 (SPI-1 T3SS), and delivered into the host cell.</text>
</comment>
<comment type="PTM">
    <text evidence="2">Ubiquitinated in the presence of host E1 ubiquitin-activating enzyme, E2 ubiquitin-conjugating enzyme and ubiquitin.</text>
</comment>
<comment type="similarity">
    <text evidence="4">Belongs to the SopA E3 ligase family.</text>
</comment>
<reference key="1">
    <citation type="journal article" date="2011" name="J. Bacteriol.">
        <title>Comparative genomics of 28 Salmonella enterica isolates: evidence for CRISPR-mediated adaptive sublineage evolution.</title>
        <authorList>
            <person name="Fricke W.F."/>
            <person name="Mammel M.K."/>
            <person name="McDermott P.F."/>
            <person name="Tartera C."/>
            <person name="White D.G."/>
            <person name="Leclerc J.E."/>
            <person name="Ravel J."/>
            <person name="Cebula T.A."/>
        </authorList>
    </citation>
    <scope>NUCLEOTIDE SEQUENCE [LARGE SCALE GENOMIC DNA]</scope>
    <source>
        <strain>SL254</strain>
    </source>
</reference>
<accession>B4SX34</accession>
<evidence type="ECO:0000250" key="1"/>
<evidence type="ECO:0000250" key="2">
    <source>
        <dbReference type="UniProtKB" id="Q8ZNR3"/>
    </source>
</evidence>
<evidence type="ECO:0000256" key="3">
    <source>
        <dbReference type="SAM" id="MobiDB-lite"/>
    </source>
</evidence>
<evidence type="ECO:0000305" key="4"/>
<proteinExistence type="inferred from homology"/>
<protein>
    <recommendedName>
        <fullName>E3 ubiquitin-protein ligase SopA</fullName>
        <ecNumber>2.3.2.26</ecNumber>
    </recommendedName>
    <alternativeName>
        <fullName evidence="4">HECT-type E3 ubiquitin transferase SopA</fullName>
    </alternativeName>
    <alternativeName>
        <fullName>Salmonella outer protein A</fullName>
    </alternativeName>
    <alternativeName>
        <fullName>Secreted effector protein SopA</fullName>
    </alternativeName>
</protein>